<sequence length="50" mass="5658">MAQKKASLACVECGSRNYSIGVSSTPKPTRLEVNKFCKYCKTYTLHKETR</sequence>
<proteinExistence type="inferred from homology"/>
<organism>
    <name type="scientific">Streptococcus pyogenes serotype M28 (strain MGAS6180)</name>
    <dbReference type="NCBI Taxonomy" id="319701"/>
    <lineage>
        <taxon>Bacteria</taxon>
        <taxon>Bacillati</taxon>
        <taxon>Bacillota</taxon>
        <taxon>Bacilli</taxon>
        <taxon>Lactobacillales</taxon>
        <taxon>Streptococcaceae</taxon>
        <taxon>Streptococcus</taxon>
    </lineage>
</organism>
<name>RL332_STRPM</name>
<comment type="similarity">
    <text evidence="1">Belongs to the bacterial ribosomal protein bL33 family.</text>
</comment>
<dbReference type="EMBL" id="CP000056">
    <property type="protein sequence ID" value="AAX72848.1"/>
    <property type="molecule type" value="Genomic_DNA"/>
</dbReference>
<dbReference type="SMR" id="Q48R12"/>
<dbReference type="KEGG" id="spb:M28_Spy1738"/>
<dbReference type="HOGENOM" id="CLU_190949_0_1_9"/>
<dbReference type="GO" id="GO:0005737">
    <property type="term" value="C:cytoplasm"/>
    <property type="evidence" value="ECO:0007669"/>
    <property type="project" value="UniProtKB-ARBA"/>
</dbReference>
<dbReference type="GO" id="GO:1990904">
    <property type="term" value="C:ribonucleoprotein complex"/>
    <property type="evidence" value="ECO:0007669"/>
    <property type="project" value="UniProtKB-KW"/>
</dbReference>
<dbReference type="GO" id="GO:0005840">
    <property type="term" value="C:ribosome"/>
    <property type="evidence" value="ECO:0007669"/>
    <property type="project" value="UniProtKB-KW"/>
</dbReference>
<dbReference type="GO" id="GO:0003735">
    <property type="term" value="F:structural constituent of ribosome"/>
    <property type="evidence" value="ECO:0007669"/>
    <property type="project" value="InterPro"/>
</dbReference>
<dbReference type="GO" id="GO:0006412">
    <property type="term" value="P:translation"/>
    <property type="evidence" value="ECO:0007669"/>
    <property type="project" value="UniProtKB-UniRule"/>
</dbReference>
<dbReference type="Gene3D" id="2.20.28.120">
    <property type="entry name" value="Ribosomal protein L33"/>
    <property type="match status" value="1"/>
</dbReference>
<dbReference type="HAMAP" id="MF_00294">
    <property type="entry name" value="Ribosomal_bL33"/>
    <property type="match status" value="1"/>
</dbReference>
<dbReference type="InterPro" id="IPR001705">
    <property type="entry name" value="Ribosomal_bL33"/>
</dbReference>
<dbReference type="InterPro" id="IPR038584">
    <property type="entry name" value="Ribosomal_bL33_sf"/>
</dbReference>
<dbReference type="InterPro" id="IPR011332">
    <property type="entry name" value="Ribosomal_zn-bd"/>
</dbReference>
<dbReference type="NCBIfam" id="NF001764">
    <property type="entry name" value="PRK00504.1"/>
    <property type="match status" value="1"/>
</dbReference>
<dbReference type="NCBIfam" id="TIGR01023">
    <property type="entry name" value="rpmG_bact"/>
    <property type="match status" value="1"/>
</dbReference>
<dbReference type="Pfam" id="PF00471">
    <property type="entry name" value="Ribosomal_L33"/>
    <property type="match status" value="1"/>
</dbReference>
<dbReference type="SUPFAM" id="SSF57829">
    <property type="entry name" value="Zn-binding ribosomal proteins"/>
    <property type="match status" value="1"/>
</dbReference>
<feature type="chain" id="PRO_0000356729" description="Large ribosomal subunit protein bL33B">
    <location>
        <begin position="1"/>
        <end position="50"/>
    </location>
</feature>
<evidence type="ECO:0000255" key="1">
    <source>
        <dbReference type="HAMAP-Rule" id="MF_00294"/>
    </source>
</evidence>
<accession>Q48R12</accession>
<protein>
    <recommendedName>
        <fullName evidence="1">Large ribosomal subunit protein bL33B</fullName>
    </recommendedName>
    <alternativeName>
        <fullName evidence="1">50S ribosomal protein L33 2</fullName>
    </alternativeName>
</protein>
<gene>
    <name evidence="1" type="primary">rpmG2</name>
    <name type="ordered locus">M28_Spy1738</name>
</gene>
<reference key="1">
    <citation type="journal article" date="2005" name="J. Infect. Dis.">
        <title>Genome sequence of a serotype M28 strain of group A Streptococcus: potential new insights into puerperal sepsis and bacterial disease specificity.</title>
        <authorList>
            <person name="Green N.M."/>
            <person name="Zhang S."/>
            <person name="Porcella S.F."/>
            <person name="Nagiec M.J."/>
            <person name="Barbian K.D."/>
            <person name="Beres S.B."/>
            <person name="Lefebvre R.B."/>
            <person name="Musser J.M."/>
        </authorList>
    </citation>
    <scope>NUCLEOTIDE SEQUENCE [LARGE SCALE GENOMIC DNA]</scope>
    <source>
        <strain>MGAS6180</strain>
    </source>
</reference>
<keyword id="KW-0687">Ribonucleoprotein</keyword>
<keyword id="KW-0689">Ribosomal protein</keyword>